<evidence type="ECO:0000255" key="1">
    <source>
        <dbReference type="HAMAP-Rule" id="MF_00011"/>
    </source>
</evidence>
<keyword id="KW-0963">Cytoplasm</keyword>
<keyword id="KW-0342">GTP-binding</keyword>
<keyword id="KW-0436">Ligase</keyword>
<keyword id="KW-0460">Magnesium</keyword>
<keyword id="KW-0479">Metal-binding</keyword>
<keyword id="KW-0547">Nucleotide-binding</keyword>
<keyword id="KW-0658">Purine biosynthesis</keyword>
<protein>
    <recommendedName>
        <fullName evidence="1">Adenylosuccinate synthetase</fullName>
        <shortName evidence="1">AMPSase</shortName>
        <shortName evidence="1">AdSS</shortName>
        <ecNumber evidence="1">6.3.4.4</ecNumber>
    </recommendedName>
    <alternativeName>
        <fullName evidence="1">IMP--aspartate ligase</fullName>
    </alternativeName>
</protein>
<reference key="1">
    <citation type="submission" date="1997-04" db="EMBL/GenBank/DDBJ databases">
        <title>Sequence Analysis of Corynebacterium ammoniagenes purA.</title>
        <authorList>
            <person name="Yonetani Y."/>
            <person name="Teshiba S."/>
        </authorList>
    </citation>
    <scope>NUCLEOTIDE SEQUENCE [GENOMIC DNA]</scope>
</reference>
<sequence length="430" mass="46991">MAAIVIVGAQWGDEGKGKATDILGGRVDYVVKPNGGNNAGHTVVVGGEKYELKLLPAGILSENAVPVLGNGVVINLEALFEEIEGLEARGADASRLRISANAHLVAPYHQTLDRVQERFLGKRAIGTTGRGIGPAYADKVARVGVRVQDIFDESILRQKVESALDIKNQMLVKMYNRKAIDPETIVEYFLSYRDRLEPMVVDSEYELNTALDAGKHVLMEGGQATMLDVDHGTYPFVTSSNPTAGGASVGSGVGPTRITHSLGIIKAYTTRVGAGPFPTELFDKWGEYLQTTGGEVGVNTGRTRRCGWYDSVIARYASRVNGFTDYFLTKLDVLTGIGEIPICVAYDVDGERFDEMPLTQSQFHHAQPIYETMPAWEEDITGCTTFEELPQKAQDYVLRLEELSGTRMSYIGVGPGRDQTIVRHDVLDEK</sequence>
<name>PURA_CORAM</name>
<proteinExistence type="inferred from homology"/>
<gene>
    <name evidence="1" type="primary">purA</name>
</gene>
<dbReference type="EC" id="6.3.4.4" evidence="1"/>
<dbReference type="EMBL" id="AB003160">
    <property type="protein sequence ID" value="BAA89445.1"/>
    <property type="molecule type" value="Genomic_DNA"/>
</dbReference>
<dbReference type="SMR" id="Q9RHX5"/>
<dbReference type="UniPathway" id="UPA00075">
    <property type="reaction ID" value="UER00335"/>
</dbReference>
<dbReference type="GO" id="GO:0005737">
    <property type="term" value="C:cytoplasm"/>
    <property type="evidence" value="ECO:0007669"/>
    <property type="project" value="UniProtKB-SubCell"/>
</dbReference>
<dbReference type="GO" id="GO:0004019">
    <property type="term" value="F:adenylosuccinate synthase activity"/>
    <property type="evidence" value="ECO:0007669"/>
    <property type="project" value="UniProtKB-UniRule"/>
</dbReference>
<dbReference type="GO" id="GO:0005525">
    <property type="term" value="F:GTP binding"/>
    <property type="evidence" value="ECO:0007669"/>
    <property type="project" value="UniProtKB-UniRule"/>
</dbReference>
<dbReference type="GO" id="GO:0000287">
    <property type="term" value="F:magnesium ion binding"/>
    <property type="evidence" value="ECO:0007669"/>
    <property type="project" value="UniProtKB-UniRule"/>
</dbReference>
<dbReference type="GO" id="GO:0044208">
    <property type="term" value="P:'de novo' AMP biosynthetic process"/>
    <property type="evidence" value="ECO:0007669"/>
    <property type="project" value="UniProtKB-UniRule"/>
</dbReference>
<dbReference type="GO" id="GO:0046040">
    <property type="term" value="P:IMP metabolic process"/>
    <property type="evidence" value="ECO:0007669"/>
    <property type="project" value="TreeGrafter"/>
</dbReference>
<dbReference type="CDD" id="cd03108">
    <property type="entry name" value="AdSS"/>
    <property type="match status" value="1"/>
</dbReference>
<dbReference type="FunFam" id="1.10.300.10:FF:000001">
    <property type="entry name" value="Adenylosuccinate synthetase"/>
    <property type="match status" value="1"/>
</dbReference>
<dbReference type="FunFam" id="3.90.170.10:FF:000001">
    <property type="entry name" value="Adenylosuccinate synthetase"/>
    <property type="match status" value="1"/>
</dbReference>
<dbReference type="Gene3D" id="3.40.440.10">
    <property type="entry name" value="Adenylosuccinate Synthetase, subunit A, domain 1"/>
    <property type="match status" value="1"/>
</dbReference>
<dbReference type="Gene3D" id="1.10.300.10">
    <property type="entry name" value="Adenylosuccinate Synthetase, subunit A, domain 2"/>
    <property type="match status" value="1"/>
</dbReference>
<dbReference type="Gene3D" id="3.90.170.10">
    <property type="entry name" value="Adenylosuccinate Synthetase, subunit A, domain 3"/>
    <property type="match status" value="1"/>
</dbReference>
<dbReference type="HAMAP" id="MF_00011">
    <property type="entry name" value="Adenylosucc_synth"/>
    <property type="match status" value="1"/>
</dbReference>
<dbReference type="InterPro" id="IPR018220">
    <property type="entry name" value="Adenylosuccin_syn_GTP-bd"/>
</dbReference>
<dbReference type="InterPro" id="IPR033128">
    <property type="entry name" value="Adenylosuccin_syn_Lys_AS"/>
</dbReference>
<dbReference type="InterPro" id="IPR042109">
    <property type="entry name" value="Adenylosuccinate_synth_dom1"/>
</dbReference>
<dbReference type="InterPro" id="IPR042110">
    <property type="entry name" value="Adenylosuccinate_synth_dom2"/>
</dbReference>
<dbReference type="InterPro" id="IPR042111">
    <property type="entry name" value="Adenylosuccinate_synth_dom3"/>
</dbReference>
<dbReference type="InterPro" id="IPR001114">
    <property type="entry name" value="Adenylosuccinate_synthetase"/>
</dbReference>
<dbReference type="InterPro" id="IPR027417">
    <property type="entry name" value="P-loop_NTPase"/>
</dbReference>
<dbReference type="NCBIfam" id="NF002223">
    <property type="entry name" value="PRK01117.1"/>
    <property type="match status" value="1"/>
</dbReference>
<dbReference type="NCBIfam" id="TIGR00184">
    <property type="entry name" value="purA"/>
    <property type="match status" value="1"/>
</dbReference>
<dbReference type="PANTHER" id="PTHR11846">
    <property type="entry name" value="ADENYLOSUCCINATE SYNTHETASE"/>
    <property type="match status" value="1"/>
</dbReference>
<dbReference type="PANTHER" id="PTHR11846:SF0">
    <property type="entry name" value="ADENYLOSUCCINATE SYNTHETASE"/>
    <property type="match status" value="1"/>
</dbReference>
<dbReference type="Pfam" id="PF00709">
    <property type="entry name" value="Adenylsucc_synt"/>
    <property type="match status" value="1"/>
</dbReference>
<dbReference type="SMART" id="SM00788">
    <property type="entry name" value="Adenylsucc_synt"/>
    <property type="match status" value="1"/>
</dbReference>
<dbReference type="SUPFAM" id="SSF52540">
    <property type="entry name" value="P-loop containing nucleoside triphosphate hydrolases"/>
    <property type="match status" value="1"/>
</dbReference>
<dbReference type="PROSITE" id="PS01266">
    <property type="entry name" value="ADENYLOSUCCIN_SYN_1"/>
    <property type="match status" value="1"/>
</dbReference>
<dbReference type="PROSITE" id="PS00513">
    <property type="entry name" value="ADENYLOSUCCIN_SYN_2"/>
    <property type="match status" value="1"/>
</dbReference>
<organism>
    <name type="scientific">Corynebacterium ammoniagenes</name>
    <name type="common">Brevibacterium ammoniagenes</name>
    <dbReference type="NCBI Taxonomy" id="1697"/>
    <lineage>
        <taxon>Bacteria</taxon>
        <taxon>Bacillati</taxon>
        <taxon>Actinomycetota</taxon>
        <taxon>Actinomycetes</taxon>
        <taxon>Mycobacteriales</taxon>
        <taxon>Corynebacteriaceae</taxon>
        <taxon>Corynebacterium</taxon>
    </lineage>
</organism>
<comment type="function">
    <text evidence="1">Plays an important role in the de novo pathway of purine nucleotide biosynthesis. Catalyzes the first committed step in the biosynthesis of AMP from IMP.</text>
</comment>
<comment type="catalytic activity">
    <reaction evidence="1">
        <text>IMP + L-aspartate + GTP = N(6)-(1,2-dicarboxyethyl)-AMP + GDP + phosphate + 2 H(+)</text>
        <dbReference type="Rhea" id="RHEA:15753"/>
        <dbReference type="ChEBI" id="CHEBI:15378"/>
        <dbReference type="ChEBI" id="CHEBI:29991"/>
        <dbReference type="ChEBI" id="CHEBI:37565"/>
        <dbReference type="ChEBI" id="CHEBI:43474"/>
        <dbReference type="ChEBI" id="CHEBI:57567"/>
        <dbReference type="ChEBI" id="CHEBI:58053"/>
        <dbReference type="ChEBI" id="CHEBI:58189"/>
        <dbReference type="EC" id="6.3.4.4"/>
    </reaction>
</comment>
<comment type="cofactor">
    <cofactor evidence="1">
        <name>Mg(2+)</name>
        <dbReference type="ChEBI" id="CHEBI:18420"/>
    </cofactor>
    <text evidence="1">Binds 1 Mg(2+) ion per subunit.</text>
</comment>
<comment type="pathway">
    <text evidence="1">Purine metabolism; AMP biosynthesis via de novo pathway; AMP from IMP: step 1/2.</text>
</comment>
<comment type="subunit">
    <text evidence="1">Homodimer.</text>
</comment>
<comment type="subcellular location">
    <subcellularLocation>
        <location evidence="1">Cytoplasm</location>
    </subcellularLocation>
</comment>
<comment type="similarity">
    <text evidence="1">Belongs to the adenylosuccinate synthetase family.</text>
</comment>
<feature type="chain" id="PRO_0000095169" description="Adenylosuccinate synthetase">
    <location>
        <begin position="1"/>
        <end position="430"/>
    </location>
</feature>
<feature type="active site" description="Proton acceptor" evidence="1">
    <location>
        <position position="13"/>
    </location>
</feature>
<feature type="active site" description="Proton donor" evidence="1">
    <location>
        <position position="41"/>
    </location>
</feature>
<feature type="binding site" evidence="1">
    <location>
        <begin position="12"/>
        <end position="18"/>
    </location>
    <ligand>
        <name>GTP</name>
        <dbReference type="ChEBI" id="CHEBI:37565"/>
    </ligand>
</feature>
<feature type="binding site" description="in other chain" evidence="1">
    <location>
        <begin position="13"/>
        <end position="16"/>
    </location>
    <ligand>
        <name>IMP</name>
        <dbReference type="ChEBI" id="CHEBI:58053"/>
        <note>ligand shared between dimeric partners</note>
    </ligand>
</feature>
<feature type="binding site" evidence="1">
    <location>
        <position position="13"/>
    </location>
    <ligand>
        <name>Mg(2+)</name>
        <dbReference type="ChEBI" id="CHEBI:18420"/>
    </ligand>
</feature>
<feature type="binding site" description="in other chain" evidence="1">
    <location>
        <begin position="38"/>
        <end position="41"/>
    </location>
    <ligand>
        <name>IMP</name>
        <dbReference type="ChEBI" id="CHEBI:58053"/>
        <note>ligand shared between dimeric partners</note>
    </ligand>
</feature>
<feature type="binding site" evidence="1">
    <location>
        <begin position="40"/>
        <end position="42"/>
    </location>
    <ligand>
        <name>GTP</name>
        <dbReference type="ChEBI" id="CHEBI:37565"/>
    </ligand>
</feature>
<feature type="binding site" evidence="1">
    <location>
        <position position="40"/>
    </location>
    <ligand>
        <name>Mg(2+)</name>
        <dbReference type="ChEBI" id="CHEBI:18420"/>
    </ligand>
</feature>
<feature type="binding site" description="in other chain" evidence="1">
    <location>
        <position position="128"/>
    </location>
    <ligand>
        <name>IMP</name>
        <dbReference type="ChEBI" id="CHEBI:58053"/>
        <note>ligand shared between dimeric partners</note>
    </ligand>
</feature>
<feature type="binding site" evidence="1">
    <location>
        <position position="142"/>
    </location>
    <ligand>
        <name>IMP</name>
        <dbReference type="ChEBI" id="CHEBI:58053"/>
        <note>ligand shared between dimeric partners</note>
    </ligand>
</feature>
<feature type="binding site" description="in other chain" evidence="1">
    <location>
        <position position="223"/>
    </location>
    <ligand>
        <name>IMP</name>
        <dbReference type="ChEBI" id="CHEBI:58053"/>
        <note>ligand shared between dimeric partners</note>
    </ligand>
</feature>
<feature type="binding site" description="in other chain" evidence="1">
    <location>
        <position position="238"/>
    </location>
    <ligand>
        <name>IMP</name>
        <dbReference type="ChEBI" id="CHEBI:58053"/>
        <note>ligand shared between dimeric partners</note>
    </ligand>
</feature>
<feature type="binding site" evidence="1">
    <location>
        <begin position="298"/>
        <end position="304"/>
    </location>
    <ligand>
        <name>substrate</name>
    </ligand>
</feature>
<feature type="binding site" description="in other chain" evidence="1">
    <location>
        <position position="302"/>
    </location>
    <ligand>
        <name>IMP</name>
        <dbReference type="ChEBI" id="CHEBI:58053"/>
        <note>ligand shared between dimeric partners</note>
    </ligand>
</feature>
<feature type="binding site" evidence="1">
    <location>
        <position position="304"/>
    </location>
    <ligand>
        <name>GTP</name>
        <dbReference type="ChEBI" id="CHEBI:37565"/>
    </ligand>
</feature>
<feature type="binding site" evidence="1">
    <location>
        <begin position="330"/>
        <end position="332"/>
    </location>
    <ligand>
        <name>GTP</name>
        <dbReference type="ChEBI" id="CHEBI:37565"/>
    </ligand>
</feature>
<feature type="binding site" evidence="1">
    <location>
        <begin position="412"/>
        <end position="414"/>
    </location>
    <ligand>
        <name>GTP</name>
        <dbReference type="ChEBI" id="CHEBI:37565"/>
    </ligand>
</feature>
<accession>Q9RHX5</accession>